<keyword id="KW-0002">3D-structure</keyword>
<keyword id="KW-0012">Acyltransferase</keyword>
<keyword id="KW-0016">Alginate biosynthesis</keyword>
<keyword id="KW-0997">Cell inner membrane</keyword>
<keyword id="KW-1003">Cell membrane</keyword>
<keyword id="KW-0472">Membrane</keyword>
<keyword id="KW-0574">Periplasm</keyword>
<keyword id="KW-1185">Reference proteome</keyword>
<keyword id="KW-0732">Signal</keyword>
<keyword id="KW-0808">Transferase</keyword>
<organism>
    <name type="scientific">Pseudomonas putida (strain ATCC 47054 / DSM 6125 / CFBP 8728 / NCIMB 11950 / KT2440)</name>
    <dbReference type="NCBI Taxonomy" id="160488"/>
    <lineage>
        <taxon>Bacteria</taxon>
        <taxon>Pseudomonadati</taxon>
        <taxon>Pseudomonadota</taxon>
        <taxon>Gammaproteobacteria</taxon>
        <taxon>Pseudomonadales</taxon>
        <taxon>Pseudomonadaceae</taxon>
        <taxon>Pseudomonas</taxon>
    </lineage>
</organism>
<sequence>MTRTLRITYSLSFLGLLVGMGAWSTGGLQSFQRTEQMTLLNGKLAKAAETHYDAEFPIKRLGTNVWAAMDFKLFNEGRPGVVLGRDQWLFSDEEFKPTAGAEQLMQENLALIRGVRDTLQQHGSQLVLAIVPAKARVYTEYLGKERPASLHDDLYNQFHAQARQANVFAPDLMAPMEQAKARGQVFLRTDTHWTPMGAEVAAQALAEAVSRQSLLNGDPQAFITEAGNTAPYKGDLTNFLPLDPLFSNLLPAPDNLQKRTTRPVDAEGDAGDALFADKQIPVALVGTSYSANPHWNFLGALQQALRSDVANYAEDGHGPLLPMLKYLQSDAFKNAAPQVVVWEFPERYLPMKNDLSSFDPQWIAQLKNSRKSEENLALSSTRTDH</sequence>
<gene>
    <name type="primary">algJ</name>
    <name type="ordered locus">PP_1279</name>
</gene>
<accession>Q88ND3</accession>
<proteinExistence type="evidence at protein level"/>
<reference key="1">
    <citation type="journal article" date="2002" name="Environ. Microbiol.">
        <title>Complete genome sequence and comparative analysis of the metabolically versatile Pseudomonas putida KT2440.</title>
        <authorList>
            <person name="Nelson K.E."/>
            <person name="Weinel C."/>
            <person name="Paulsen I.T."/>
            <person name="Dodson R.J."/>
            <person name="Hilbert H."/>
            <person name="Martins dos Santos V.A.P."/>
            <person name="Fouts D.E."/>
            <person name="Gill S.R."/>
            <person name="Pop M."/>
            <person name="Holmes M."/>
            <person name="Brinkac L.M."/>
            <person name="Beanan M.J."/>
            <person name="DeBoy R.T."/>
            <person name="Daugherty S.C."/>
            <person name="Kolonay J.F."/>
            <person name="Madupu R."/>
            <person name="Nelson W.C."/>
            <person name="White O."/>
            <person name="Peterson J.D."/>
            <person name="Khouri H.M."/>
            <person name="Hance I."/>
            <person name="Chris Lee P."/>
            <person name="Holtzapple E.K."/>
            <person name="Scanlan D."/>
            <person name="Tran K."/>
            <person name="Moazzez A."/>
            <person name="Utterback T.R."/>
            <person name="Rizzo M."/>
            <person name="Lee K."/>
            <person name="Kosack D."/>
            <person name="Moestl D."/>
            <person name="Wedler H."/>
            <person name="Lauber J."/>
            <person name="Stjepandic D."/>
            <person name="Hoheisel J."/>
            <person name="Straetz M."/>
            <person name="Heim S."/>
            <person name="Kiewitz C."/>
            <person name="Eisen J.A."/>
            <person name="Timmis K.N."/>
            <person name="Duesterhoeft A."/>
            <person name="Tuemmler B."/>
            <person name="Fraser C.M."/>
        </authorList>
    </citation>
    <scope>NUCLEOTIDE SEQUENCE [LARGE SCALE GENOMIC DNA]</scope>
    <source>
        <strain>ATCC 47054 / DSM 6125 / CFBP 8728 / NCIMB 11950 / KT2440</strain>
    </source>
</reference>
<feature type="signal peptide" evidence="2">
    <location>
        <begin position="1"/>
        <end position="21"/>
    </location>
</feature>
<feature type="chain" id="PRO_0000001122" description="Probable alginate O-acetylase AlgJ">
    <location>
        <begin position="22"/>
        <end position="385"/>
    </location>
</feature>
<feature type="active site" evidence="1">
    <location>
        <position position="190"/>
    </location>
</feature>
<feature type="active site" description="Proton acceptor" evidence="1">
    <location>
        <position position="192"/>
    </location>
</feature>
<feature type="active site" description="Nucleophile" evidence="1">
    <location>
        <position position="288"/>
    </location>
</feature>
<feature type="strand" evidence="4">
    <location>
        <begin position="81"/>
        <end position="83"/>
    </location>
</feature>
<feature type="strand" evidence="4">
    <location>
        <begin position="89"/>
        <end position="91"/>
    </location>
</feature>
<feature type="helix" evidence="4">
    <location>
        <begin position="92"/>
        <end position="94"/>
    </location>
</feature>
<feature type="helix" evidence="4">
    <location>
        <begin position="101"/>
        <end position="121"/>
    </location>
</feature>
<feature type="strand" evidence="4">
    <location>
        <begin position="125"/>
        <end position="131"/>
    </location>
</feature>
<feature type="helix" evidence="4">
    <location>
        <begin position="134"/>
        <end position="137"/>
    </location>
</feature>
<feature type="helix" evidence="4">
    <location>
        <begin position="139"/>
        <end position="141"/>
    </location>
</feature>
<feature type="helix" evidence="4">
    <location>
        <begin position="149"/>
        <end position="151"/>
    </location>
</feature>
<feature type="helix" evidence="4">
    <location>
        <begin position="154"/>
        <end position="164"/>
    </location>
</feature>
<feature type="helix" evidence="4">
    <location>
        <begin position="173"/>
        <end position="179"/>
    </location>
</feature>
<feature type="turn" evidence="4">
    <location>
        <begin position="180"/>
        <end position="182"/>
    </location>
</feature>
<feature type="strand" evidence="4">
    <location>
        <begin position="188"/>
        <end position="193"/>
    </location>
</feature>
<feature type="helix" evidence="4">
    <location>
        <begin position="195"/>
        <end position="211"/>
    </location>
</feature>
<feature type="strand" evidence="4">
    <location>
        <begin position="222"/>
        <end position="232"/>
    </location>
</feature>
<feature type="helix" evidence="4">
    <location>
        <begin position="235"/>
        <end position="239"/>
    </location>
</feature>
<feature type="helix" evidence="4">
    <location>
        <begin position="244"/>
        <end position="249"/>
    </location>
</feature>
<feature type="strand" evidence="4">
    <location>
        <begin position="254"/>
        <end position="263"/>
    </location>
</feature>
<feature type="strand" evidence="4">
    <location>
        <begin position="281"/>
        <end position="285"/>
    </location>
</feature>
<feature type="helix" evidence="4">
    <location>
        <begin position="288"/>
        <end position="291"/>
    </location>
</feature>
<feature type="helix" evidence="4">
    <location>
        <begin position="293"/>
        <end position="295"/>
    </location>
</feature>
<feature type="helix" evidence="4">
    <location>
        <begin position="297"/>
        <end position="305"/>
    </location>
</feature>
<feature type="strand" evidence="4">
    <location>
        <begin position="315"/>
        <end position="317"/>
    </location>
</feature>
<feature type="helix" evidence="4">
    <location>
        <begin position="320"/>
        <end position="327"/>
    </location>
</feature>
<feature type="helix" evidence="4">
    <location>
        <begin position="330"/>
        <end position="334"/>
    </location>
</feature>
<feature type="strand" evidence="4">
    <location>
        <begin position="338"/>
        <end position="345"/>
    </location>
</feature>
<feature type="helix" evidence="4">
    <location>
        <begin position="346"/>
        <end position="348"/>
    </location>
</feature>
<feature type="helix" evidence="4">
    <location>
        <begin position="360"/>
        <end position="367"/>
    </location>
</feature>
<protein>
    <recommendedName>
        <fullName>Probable alginate O-acetylase AlgJ</fullName>
        <ecNumber>2.3.1.-</ecNumber>
    </recommendedName>
    <alternativeName>
        <fullName>Alginate biosynthesis protein AlgJ</fullName>
    </alternativeName>
</protein>
<dbReference type="EC" id="2.3.1.-"/>
<dbReference type="EMBL" id="AE015451">
    <property type="protein sequence ID" value="AAN66903.1"/>
    <property type="status" value="ALT_INIT"/>
    <property type="molecule type" value="Genomic_DNA"/>
</dbReference>
<dbReference type="RefSeq" id="NP_743439.1">
    <property type="nucleotide sequence ID" value="NC_002947.4"/>
</dbReference>
<dbReference type="RefSeq" id="WP_049587323.1">
    <property type="nucleotide sequence ID" value="NZ_CP169744.1"/>
</dbReference>
<dbReference type="PDB" id="4O8V">
    <property type="method" value="X-ray"/>
    <property type="resolution" value="1.82 A"/>
    <property type="chains" value="A/B=75-370"/>
</dbReference>
<dbReference type="PDBsum" id="4O8V"/>
<dbReference type="SMR" id="Q88ND3"/>
<dbReference type="STRING" id="160488.PP_1279"/>
<dbReference type="PaxDb" id="160488-PP_1279"/>
<dbReference type="KEGG" id="ppu:PP_1279"/>
<dbReference type="PATRIC" id="fig|160488.4.peg.1356"/>
<dbReference type="eggNOG" id="ENOG502Z851">
    <property type="taxonomic scope" value="Bacteria"/>
</dbReference>
<dbReference type="HOGENOM" id="CLU_057510_0_0_6"/>
<dbReference type="OrthoDB" id="9760774at2"/>
<dbReference type="PhylomeDB" id="Q88ND3"/>
<dbReference type="UniPathway" id="UPA00286"/>
<dbReference type="EvolutionaryTrace" id="Q88ND3"/>
<dbReference type="Proteomes" id="UP000000556">
    <property type="component" value="Chromosome"/>
</dbReference>
<dbReference type="GO" id="GO:0042597">
    <property type="term" value="C:periplasmic space"/>
    <property type="evidence" value="ECO:0007669"/>
    <property type="project" value="UniProtKB-SubCell"/>
</dbReference>
<dbReference type="GO" id="GO:0005886">
    <property type="term" value="C:plasma membrane"/>
    <property type="evidence" value="ECO:0007669"/>
    <property type="project" value="UniProtKB-SubCell"/>
</dbReference>
<dbReference type="GO" id="GO:0016746">
    <property type="term" value="F:acyltransferase activity"/>
    <property type="evidence" value="ECO:0007669"/>
    <property type="project" value="UniProtKB-KW"/>
</dbReference>
<dbReference type="GO" id="GO:0042121">
    <property type="term" value="P:alginic acid biosynthetic process"/>
    <property type="evidence" value="ECO:0007669"/>
    <property type="project" value="UniProtKB-UniPathway"/>
</dbReference>
<dbReference type="CDD" id="cd14442">
    <property type="entry name" value="AlgJ_like"/>
    <property type="match status" value="1"/>
</dbReference>
<dbReference type="InterPro" id="IPR034657">
    <property type="entry name" value="AlgJ"/>
</dbReference>
<dbReference type="InterPro" id="IPR031811">
    <property type="entry name" value="ALGX/ALGJ_SGNH-like"/>
</dbReference>
<dbReference type="Pfam" id="PF16822">
    <property type="entry name" value="ALGX"/>
    <property type="match status" value="1"/>
</dbReference>
<dbReference type="SUPFAM" id="SSF52266">
    <property type="entry name" value="SGNH hydrolase"/>
    <property type="match status" value="1"/>
</dbReference>
<comment type="function">
    <text evidence="1">Together with AlgI and AlgF, forms an inner membrane complex which probably interacts with the alginate polymerization-transport complex and adds acetyl groups at the O-2 and O-3 positions of mannuronate residues. Acetylation of alginate is important for the architecture of biofilms and increases the ability of alginate to act as a defense barrier (By similarity).</text>
</comment>
<comment type="pathway">
    <text>Glycan biosynthesis; alginate biosynthesis.</text>
</comment>
<comment type="subcellular location">
    <subcellularLocation>
        <location evidence="1">Cell inner membrane</location>
        <topology evidence="1">Peripheral membrane protein</topology>
        <orientation evidence="1">Periplasmic side</orientation>
    </subcellularLocation>
    <subcellularLocation>
        <location evidence="1">Periplasm</location>
    </subcellularLocation>
</comment>
<comment type="similarity">
    <text evidence="3">Belongs to the AlgJ family.</text>
</comment>
<comment type="sequence caution" evidence="3">
    <conflict type="erroneous initiation">
        <sequence resource="EMBL-CDS" id="AAN66903"/>
    </conflict>
</comment>
<name>ALGJ_PSEPK</name>
<evidence type="ECO:0000250" key="1"/>
<evidence type="ECO:0000255" key="2"/>
<evidence type="ECO:0000305" key="3"/>
<evidence type="ECO:0007829" key="4">
    <source>
        <dbReference type="PDB" id="4O8V"/>
    </source>
</evidence>